<gene>
    <name evidence="1" type="primary">rpmA</name>
    <name type="ordered locus">Pnuc_0195</name>
</gene>
<evidence type="ECO:0000255" key="1">
    <source>
        <dbReference type="HAMAP-Rule" id="MF_00539"/>
    </source>
</evidence>
<evidence type="ECO:0000256" key="2">
    <source>
        <dbReference type="SAM" id="MobiDB-lite"/>
    </source>
</evidence>
<evidence type="ECO:0000305" key="3"/>
<keyword id="KW-1185">Reference proteome</keyword>
<keyword id="KW-0687">Ribonucleoprotein</keyword>
<keyword id="KW-0689">Ribosomal protein</keyword>
<organism>
    <name type="scientific">Polynucleobacter asymbioticus (strain DSM 18221 / CIP 109841 / QLW-P1DMWA-1)</name>
    <name type="common">Polynucleobacter necessarius subsp. asymbioticus</name>
    <dbReference type="NCBI Taxonomy" id="312153"/>
    <lineage>
        <taxon>Bacteria</taxon>
        <taxon>Pseudomonadati</taxon>
        <taxon>Pseudomonadota</taxon>
        <taxon>Betaproteobacteria</taxon>
        <taxon>Burkholderiales</taxon>
        <taxon>Burkholderiaceae</taxon>
        <taxon>Polynucleobacter</taxon>
    </lineage>
</organism>
<feature type="chain" id="PRO_1000081900" description="Large ribosomal subunit protein bL27">
    <location>
        <begin position="1"/>
        <end position="86"/>
    </location>
</feature>
<feature type="region of interest" description="Disordered" evidence="2">
    <location>
        <begin position="1"/>
        <end position="22"/>
    </location>
</feature>
<feature type="compositionally biased region" description="Gly residues" evidence="2">
    <location>
        <begin position="1"/>
        <end position="10"/>
    </location>
</feature>
<accession>A4SVA2</accession>
<reference key="1">
    <citation type="journal article" date="2012" name="Stand. Genomic Sci.">
        <title>Complete genome sequence of Polynucleobacter necessarius subsp. asymbioticus type strain (QLW-P1DMWA-1(T)).</title>
        <authorList>
            <person name="Meincke L."/>
            <person name="Copeland A."/>
            <person name="Lapidus A."/>
            <person name="Lucas S."/>
            <person name="Berry K.W."/>
            <person name="Del Rio T.G."/>
            <person name="Hammon N."/>
            <person name="Dalin E."/>
            <person name="Tice H."/>
            <person name="Pitluck S."/>
            <person name="Richardson P."/>
            <person name="Bruce D."/>
            <person name="Goodwin L."/>
            <person name="Han C."/>
            <person name="Tapia R."/>
            <person name="Detter J.C."/>
            <person name="Schmutz J."/>
            <person name="Brettin T."/>
            <person name="Larimer F."/>
            <person name="Land M."/>
            <person name="Hauser L."/>
            <person name="Kyrpides N.C."/>
            <person name="Ivanova N."/>
            <person name="Goker M."/>
            <person name="Woyke T."/>
            <person name="Wu Q.L."/>
            <person name="Pockl M."/>
            <person name="Hahn M.W."/>
            <person name="Klenk H.P."/>
        </authorList>
    </citation>
    <scope>NUCLEOTIDE SEQUENCE [LARGE SCALE GENOMIC DNA]</scope>
    <source>
        <strain>DSM 18221 / CIP 109841 / QLW-P1DMWA-1</strain>
    </source>
</reference>
<name>RL27_POLAQ</name>
<comment type="similarity">
    <text evidence="1">Belongs to the bacterial ribosomal protein bL27 family.</text>
</comment>
<sequence>MAQKKGGGSTRNGRDSESKRLGVKVFGGEHINAGSIIIRQRGTRVHPGANVGIGKDHTLFALIDGQVEFGVKGALKKAQVSVLPRS</sequence>
<protein>
    <recommendedName>
        <fullName evidence="1">Large ribosomal subunit protein bL27</fullName>
    </recommendedName>
    <alternativeName>
        <fullName evidence="3">50S ribosomal protein L27</fullName>
    </alternativeName>
</protein>
<dbReference type="EMBL" id="CP000655">
    <property type="protein sequence ID" value="ABP33416.1"/>
    <property type="molecule type" value="Genomic_DNA"/>
</dbReference>
<dbReference type="RefSeq" id="WP_011902041.1">
    <property type="nucleotide sequence ID" value="NC_009379.1"/>
</dbReference>
<dbReference type="SMR" id="A4SVA2"/>
<dbReference type="GeneID" id="83596803"/>
<dbReference type="KEGG" id="pnu:Pnuc_0195"/>
<dbReference type="eggNOG" id="COG0211">
    <property type="taxonomic scope" value="Bacteria"/>
</dbReference>
<dbReference type="HOGENOM" id="CLU_095424_4_1_4"/>
<dbReference type="Proteomes" id="UP000000231">
    <property type="component" value="Chromosome"/>
</dbReference>
<dbReference type="GO" id="GO:0022625">
    <property type="term" value="C:cytosolic large ribosomal subunit"/>
    <property type="evidence" value="ECO:0007669"/>
    <property type="project" value="TreeGrafter"/>
</dbReference>
<dbReference type="GO" id="GO:0003735">
    <property type="term" value="F:structural constituent of ribosome"/>
    <property type="evidence" value="ECO:0007669"/>
    <property type="project" value="InterPro"/>
</dbReference>
<dbReference type="GO" id="GO:0006412">
    <property type="term" value="P:translation"/>
    <property type="evidence" value="ECO:0007669"/>
    <property type="project" value="UniProtKB-UniRule"/>
</dbReference>
<dbReference type="FunFam" id="2.40.50.100:FF:000001">
    <property type="entry name" value="50S ribosomal protein L27"/>
    <property type="match status" value="1"/>
</dbReference>
<dbReference type="Gene3D" id="2.40.50.100">
    <property type="match status" value="1"/>
</dbReference>
<dbReference type="HAMAP" id="MF_00539">
    <property type="entry name" value="Ribosomal_bL27"/>
    <property type="match status" value="1"/>
</dbReference>
<dbReference type="InterPro" id="IPR001684">
    <property type="entry name" value="Ribosomal_bL27"/>
</dbReference>
<dbReference type="InterPro" id="IPR018261">
    <property type="entry name" value="Ribosomal_bL27_CS"/>
</dbReference>
<dbReference type="NCBIfam" id="TIGR00062">
    <property type="entry name" value="L27"/>
    <property type="match status" value="1"/>
</dbReference>
<dbReference type="PANTHER" id="PTHR15893:SF0">
    <property type="entry name" value="LARGE RIBOSOMAL SUBUNIT PROTEIN BL27M"/>
    <property type="match status" value="1"/>
</dbReference>
<dbReference type="PANTHER" id="PTHR15893">
    <property type="entry name" value="RIBOSOMAL PROTEIN L27"/>
    <property type="match status" value="1"/>
</dbReference>
<dbReference type="Pfam" id="PF01016">
    <property type="entry name" value="Ribosomal_L27"/>
    <property type="match status" value="1"/>
</dbReference>
<dbReference type="PRINTS" id="PR00063">
    <property type="entry name" value="RIBOSOMALL27"/>
</dbReference>
<dbReference type="SUPFAM" id="SSF110324">
    <property type="entry name" value="Ribosomal L27 protein-like"/>
    <property type="match status" value="1"/>
</dbReference>
<dbReference type="PROSITE" id="PS00831">
    <property type="entry name" value="RIBOSOMAL_L27"/>
    <property type="match status" value="1"/>
</dbReference>
<proteinExistence type="inferred from homology"/>